<keyword id="KW-0002">3D-structure</keyword>
<keyword id="KW-0966">Cell projection</keyword>
<keyword id="KW-0969">Cilium</keyword>
<keyword id="KW-0963">Cytoplasm</keyword>
<keyword id="KW-0206">Cytoskeleton</keyword>
<keyword id="KW-0903">Direct protein sequencing</keyword>
<keyword id="KW-0243">Dynein</keyword>
<keyword id="KW-0282">Flagellum</keyword>
<keyword id="KW-0493">Microtubule</keyword>
<keyword id="KW-0505">Motor protein</keyword>
<keyword id="KW-0677">Repeat</keyword>
<keyword id="KW-0853">WD repeat</keyword>
<gene>
    <name type="primary">ODA6</name>
    <name type="synonym">IC70</name>
    <name type="synonym">ODA-6</name>
</gene>
<feature type="chain" id="PRO_0000114665" description="Dynein, 70 kDa intermediate chain, flagellar outer arm">
    <location>
        <begin position="1"/>
        <end position="567"/>
    </location>
</feature>
<feature type="repeat" description="WD 1">
    <location>
        <begin position="214"/>
        <end position="254"/>
    </location>
</feature>
<feature type="repeat" description="WD 2">
    <location>
        <begin position="261"/>
        <end position="302"/>
    </location>
</feature>
<feature type="repeat" description="WD 3">
    <location>
        <begin position="360"/>
        <end position="399"/>
    </location>
</feature>
<feature type="repeat" description="WD 4">
    <location>
        <begin position="404"/>
        <end position="444"/>
    </location>
</feature>
<dbReference type="EMBL" id="X55382">
    <property type="protein sequence ID" value="CAA39053.1"/>
    <property type="molecule type" value="mRNA"/>
</dbReference>
<dbReference type="EMBL" id="X68128">
    <property type="protein sequence ID" value="CAA48233.1"/>
    <property type="molecule type" value="Genomic_DNA"/>
</dbReference>
<dbReference type="PIR" id="S25521">
    <property type="entry name" value="S25521"/>
</dbReference>
<dbReference type="PDB" id="7KZM">
    <property type="method" value="EM"/>
    <property type="resolution" value="7.50 A"/>
    <property type="chains" value="E=1-567"/>
</dbReference>
<dbReference type="PDB" id="7KZN">
    <property type="method" value="EM"/>
    <property type="resolution" value="4.00 A"/>
    <property type="chains" value="E=1-567"/>
</dbReference>
<dbReference type="PDBsum" id="7KZM"/>
<dbReference type="PDBsum" id="7KZN"/>
<dbReference type="EMDB" id="EMD-23082"/>
<dbReference type="EMDB" id="EMD-23083"/>
<dbReference type="SMR" id="P27766"/>
<dbReference type="IntAct" id="P27766">
    <property type="interactions" value="6"/>
</dbReference>
<dbReference type="MINT" id="P27766"/>
<dbReference type="PaxDb" id="3055-EDP05451"/>
<dbReference type="eggNOG" id="KOG1587">
    <property type="taxonomic scope" value="Eukaryota"/>
</dbReference>
<dbReference type="GO" id="GO:0005737">
    <property type="term" value="C:cytoplasm"/>
    <property type="evidence" value="ECO:0007669"/>
    <property type="project" value="UniProtKB-KW"/>
</dbReference>
<dbReference type="GO" id="GO:0030286">
    <property type="term" value="C:dynein complex"/>
    <property type="evidence" value="ECO:0007669"/>
    <property type="project" value="UniProtKB-KW"/>
</dbReference>
<dbReference type="GO" id="GO:0005874">
    <property type="term" value="C:microtubule"/>
    <property type="evidence" value="ECO:0007669"/>
    <property type="project" value="UniProtKB-KW"/>
</dbReference>
<dbReference type="GO" id="GO:0031514">
    <property type="term" value="C:motile cilium"/>
    <property type="evidence" value="ECO:0000314"/>
    <property type="project" value="BHF-UCL"/>
</dbReference>
<dbReference type="GO" id="GO:0060294">
    <property type="term" value="P:cilium movement involved in cell motility"/>
    <property type="evidence" value="ECO:0000315"/>
    <property type="project" value="GO_Central"/>
</dbReference>
<dbReference type="GO" id="GO:0036158">
    <property type="term" value="P:outer dynein arm assembly"/>
    <property type="evidence" value="ECO:0000315"/>
    <property type="project" value="GO_Central"/>
</dbReference>
<dbReference type="FunFam" id="2.130.10.10:FF:001354">
    <property type="entry name" value="Flagellar outer dynein arm intermediate chain 2"/>
    <property type="match status" value="1"/>
</dbReference>
<dbReference type="FunFam" id="2.130.10.10:FF:002328">
    <property type="entry name" value="Flagellar outer dynein arm intermediate chain 2"/>
    <property type="match status" value="1"/>
</dbReference>
<dbReference type="Gene3D" id="2.130.10.10">
    <property type="entry name" value="YVTN repeat-like/Quinoprotein amine dehydrogenase"/>
    <property type="match status" value="2"/>
</dbReference>
<dbReference type="InterPro" id="IPR050687">
    <property type="entry name" value="Dynein_IC"/>
</dbReference>
<dbReference type="InterPro" id="IPR015943">
    <property type="entry name" value="WD40/YVTN_repeat-like_dom_sf"/>
</dbReference>
<dbReference type="InterPro" id="IPR036322">
    <property type="entry name" value="WD40_repeat_dom_sf"/>
</dbReference>
<dbReference type="InterPro" id="IPR001680">
    <property type="entry name" value="WD40_rpt"/>
</dbReference>
<dbReference type="PANTHER" id="PTHR12442:SF7">
    <property type="entry name" value="DYNEIN AXONEMAL INTERMEDIATE CHAIN 2"/>
    <property type="match status" value="1"/>
</dbReference>
<dbReference type="PANTHER" id="PTHR12442">
    <property type="entry name" value="DYNEIN INTERMEDIATE CHAIN"/>
    <property type="match status" value="1"/>
</dbReference>
<dbReference type="SMART" id="SM00320">
    <property type="entry name" value="WD40"/>
    <property type="match status" value="5"/>
</dbReference>
<dbReference type="SUPFAM" id="SSF50978">
    <property type="entry name" value="WD40 repeat-like"/>
    <property type="match status" value="1"/>
</dbReference>
<dbReference type="PROSITE" id="PS50294">
    <property type="entry name" value="WD_REPEATS_REGION"/>
    <property type="match status" value="1"/>
</dbReference>
<accession>P27766</accession>
<proteinExistence type="evidence at protein level"/>
<evidence type="ECO:0000305" key="1"/>
<comment type="function">
    <text>May play a role in regulating dynein heavy chain (DHC) activity. May function in holding IC78 to the DHC, or in stabilizing the entire dynein complex.</text>
</comment>
<comment type="subunit">
    <text>Consists of at least 3 heavy chains (alpha, beta and gamma), 2 intermediate chains and 8 light chains.</text>
</comment>
<comment type="interaction">
    <interactant intactId="EBI-6081316">
        <id>P27766</id>
    </interactant>
    <interactant intactId="EBI-8534794">
        <id>A8IPZ5</id>
        <label>CHLRE_17g703850v5</label>
    </interactant>
    <organismsDiffer>false</organismsDiffer>
    <experiments>3</experiments>
</comment>
<comment type="interaction">
    <interactant intactId="EBI-6081316">
        <id>P27766</id>
    </interactant>
    <interactant intactId="EBI-8534634">
        <id>Q39578</id>
        <label>ODA9</label>
    </interactant>
    <organismsDiffer>false</organismsDiffer>
    <experiments>2</experiments>
</comment>
<comment type="subcellular location">
    <subcellularLocation>
        <location>Cytoplasm</location>
        <location>Cytoskeleton</location>
        <location>Flagellum axoneme</location>
    </subcellularLocation>
</comment>
<comment type="similarity">
    <text evidence="1">Belongs to the dynein intermediate chain family.</text>
</comment>
<reference key="1">
    <citation type="journal article" date="1991" name="J. Cell Biol.">
        <title>Identification of oda6 as a Chlamydomonas dynein mutant by rescue with the wild-type gene.</title>
        <authorList>
            <person name="Mitchell D.R."/>
            <person name="Kang Y."/>
        </authorList>
    </citation>
    <scope>NUCLEOTIDE SEQUENCE [MRNA]</scope>
    <scope>PROTEIN SEQUENCE OF 332-350</scope>
    <source>
        <strain>137c / CC-125</strain>
    </source>
</reference>
<reference key="2">
    <citation type="journal article" date="1993" name="J. Cell Sci.">
        <title>Reversion analysis of dynein intermediate chain function.</title>
        <authorList>
            <person name="Mitchell D.R."/>
            <person name="Kang Y."/>
        </authorList>
    </citation>
    <scope>NUCLEOTIDE SEQUENCE [GENOMIC DNA]</scope>
    <source>
        <strain>137c / CC-125</strain>
    </source>
</reference>
<protein>
    <recommendedName>
        <fullName>Dynein, 70 kDa intermediate chain, flagellar outer arm</fullName>
    </recommendedName>
    <alternativeName>
        <fullName>IC69</fullName>
    </alternativeName>
    <alternativeName>
        <fullName>IC70</fullName>
    </alternativeName>
</protein>
<organism>
    <name type="scientific">Chlamydomonas reinhardtii</name>
    <name type="common">Chlamydomonas smithii</name>
    <dbReference type="NCBI Taxonomy" id="3055"/>
    <lineage>
        <taxon>Eukaryota</taxon>
        <taxon>Viridiplantae</taxon>
        <taxon>Chlorophyta</taxon>
        <taxon>core chlorophytes</taxon>
        <taxon>Chlorophyceae</taxon>
        <taxon>CS clade</taxon>
        <taxon>Chlamydomonadales</taxon>
        <taxon>Chlamydomonadaceae</taxon>
        <taxon>Chlamydomonas</taxon>
    </lineage>
</organism>
<name>DYI3_CHLRE</name>
<sequence>MEIYHQYIKLRKQFGRFPKFGDEGSEMLADIRPNEDHGKEYIPRNPVTTVTQCVPEMSEHEANTNAVILVNKAMSHVEGGWPKDVDYTEAEHTIRYRKKVEKDEDYIRTVVQLGSSVEDLIKQNNAVDIYQEYFTNVTMDHTSEAPHVKTVTVFKDPNNIKRSASYVNWHPDGSVPKVVVAYSILQFQQQPAGMPLSSYIWDVNNPNTPEYEMVPTSQICCAKFNLKDNNLVGAGQYNGQLAYFDVRKGNGPVEATPIDISHRDPIYDFAWLQSKTGTECMTVSTDGNVLWWDLRKMNECVENMPLKEKNSETTVGGVCLEYDTNAGPTNFMVGTEQGQIFSCNRKAKNPVDRVKYVLSGHHGPIYGLRRNPFNSKYFLSIGDWTARVWVEDTAVKTPILTTKYHPTYLTGGTWSPSRPGVFFTIKMDGAMDVWDLYYKHNEPTLTVQVSDLALTAFAVQESGGTVAVGTSDGCTSVLQLSTGLSEASPAEKANINAMFERETTREKNLEKAIKEAKVKARKEQGRRDEVKDNVTEEQLKALEDEFFKTTDPAVGGGYGAGEGAAAE</sequence>